<comment type="function">
    <text evidence="1">Catalyzes the NADPH-dependent reduction of L-glutamate 5-phosphate into L-glutamate 5-semialdehyde and phosphate. The product spontaneously undergoes cyclization to form 1-pyrroline-5-carboxylate.</text>
</comment>
<comment type="catalytic activity">
    <reaction evidence="1">
        <text>L-glutamate 5-semialdehyde + phosphate + NADP(+) = L-glutamyl 5-phosphate + NADPH + H(+)</text>
        <dbReference type="Rhea" id="RHEA:19541"/>
        <dbReference type="ChEBI" id="CHEBI:15378"/>
        <dbReference type="ChEBI" id="CHEBI:43474"/>
        <dbReference type="ChEBI" id="CHEBI:57783"/>
        <dbReference type="ChEBI" id="CHEBI:58066"/>
        <dbReference type="ChEBI" id="CHEBI:58274"/>
        <dbReference type="ChEBI" id="CHEBI:58349"/>
        <dbReference type="EC" id="1.2.1.41"/>
    </reaction>
</comment>
<comment type="pathway">
    <text evidence="1">Amino-acid biosynthesis; L-proline biosynthesis; L-glutamate 5-semialdehyde from L-glutamate: step 2/2.</text>
</comment>
<comment type="subcellular location">
    <subcellularLocation>
        <location evidence="1">Cytoplasm</location>
    </subcellularLocation>
</comment>
<comment type="similarity">
    <text evidence="1">Belongs to the gamma-glutamyl phosphate reductase family.</text>
</comment>
<evidence type="ECO:0000255" key="1">
    <source>
        <dbReference type="HAMAP-Rule" id="MF_00412"/>
    </source>
</evidence>
<keyword id="KW-0028">Amino-acid biosynthesis</keyword>
<keyword id="KW-0963">Cytoplasm</keyword>
<keyword id="KW-0521">NADP</keyword>
<keyword id="KW-0560">Oxidoreductase</keyword>
<keyword id="KW-0641">Proline biosynthesis</keyword>
<keyword id="KW-1185">Reference proteome</keyword>
<name>PROA_CALS4</name>
<proteinExistence type="inferred from homology"/>
<feature type="chain" id="PRO_0000189805" description="Gamma-glutamyl phosphate reductase">
    <location>
        <begin position="1"/>
        <end position="414"/>
    </location>
</feature>
<organism>
    <name type="scientific">Caldanaerobacter subterraneus subsp. tengcongensis (strain DSM 15242 / JCM 11007 / NBRC 100824 / MB4)</name>
    <name type="common">Thermoanaerobacter tengcongensis</name>
    <dbReference type="NCBI Taxonomy" id="273068"/>
    <lineage>
        <taxon>Bacteria</taxon>
        <taxon>Bacillati</taxon>
        <taxon>Bacillota</taxon>
        <taxon>Clostridia</taxon>
        <taxon>Thermoanaerobacterales</taxon>
        <taxon>Thermoanaerobacteraceae</taxon>
        <taxon>Caldanaerobacter</taxon>
    </lineage>
</organism>
<dbReference type="EC" id="1.2.1.41" evidence="1"/>
<dbReference type="EMBL" id="AE008691">
    <property type="protein sequence ID" value="AAM24502.1"/>
    <property type="molecule type" value="Genomic_DNA"/>
</dbReference>
<dbReference type="RefSeq" id="WP_011025593.1">
    <property type="nucleotide sequence ID" value="NC_003869.1"/>
</dbReference>
<dbReference type="SMR" id="Q8RAE5"/>
<dbReference type="STRING" id="273068.TTE1278"/>
<dbReference type="KEGG" id="tte:TTE1278"/>
<dbReference type="eggNOG" id="COG0014">
    <property type="taxonomic scope" value="Bacteria"/>
</dbReference>
<dbReference type="HOGENOM" id="CLU_030231_0_0_9"/>
<dbReference type="OrthoDB" id="9809970at2"/>
<dbReference type="UniPathway" id="UPA00098">
    <property type="reaction ID" value="UER00360"/>
</dbReference>
<dbReference type="Proteomes" id="UP000000555">
    <property type="component" value="Chromosome"/>
</dbReference>
<dbReference type="GO" id="GO:0005737">
    <property type="term" value="C:cytoplasm"/>
    <property type="evidence" value="ECO:0007669"/>
    <property type="project" value="UniProtKB-SubCell"/>
</dbReference>
<dbReference type="GO" id="GO:0004350">
    <property type="term" value="F:glutamate-5-semialdehyde dehydrogenase activity"/>
    <property type="evidence" value="ECO:0007669"/>
    <property type="project" value="UniProtKB-UniRule"/>
</dbReference>
<dbReference type="GO" id="GO:0050661">
    <property type="term" value="F:NADP binding"/>
    <property type="evidence" value="ECO:0007669"/>
    <property type="project" value="InterPro"/>
</dbReference>
<dbReference type="GO" id="GO:0055129">
    <property type="term" value="P:L-proline biosynthetic process"/>
    <property type="evidence" value="ECO:0007669"/>
    <property type="project" value="UniProtKB-UniRule"/>
</dbReference>
<dbReference type="CDD" id="cd07079">
    <property type="entry name" value="ALDH_F18-19_ProA-GPR"/>
    <property type="match status" value="1"/>
</dbReference>
<dbReference type="FunFam" id="3.40.309.10:FF:000006">
    <property type="entry name" value="Gamma-glutamyl phosphate reductase"/>
    <property type="match status" value="1"/>
</dbReference>
<dbReference type="Gene3D" id="3.40.605.10">
    <property type="entry name" value="Aldehyde Dehydrogenase, Chain A, domain 1"/>
    <property type="match status" value="1"/>
</dbReference>
<dbReference type="Gene3D" id="3.40.309.10">
    <property type="entry name" value="Aldehyde Dehydrogenase, Chain A, domain 2"/>
    <property type="match status" value="1"/>
</dbReference>
<dbReference type="HAMAP" id="MF_00412">
    <property type="entry name" value="ProA"/>
    <property type="match status" value="1"/>
</dbReference>
<dbReference type="InterPro" id="IPR016161">
    <property type="entry name" value="Ald_DH/histidinol_DH"/>
</dbReference>
<dbReference type="InterPro" id="IPR016163">
    <property type="entry name" value="Ald_DH_C"/>
</dbReference>
<dbReference type="InterPro" id="IPR016162">
    <property type="entry name" value="Ald_DH_N"/>
</dbReference>
<dbReference type="InterPro" id="IPR015590">
    <property type="entry name" value="Aldehyde_DH_dom"/>
</dbReference>
<dbReference type="InterPro" id="IPR020593">
    <property type="entry name" value="G-glutamylP_reductase_CS"/>
</dbReference>
<dbReference type="InterPro" id="IPR012134">
    <property type="entry name" value="Glu-5-SA_DH"/>
</dbReference>
<dbReference type="InterPro" id="IPR000965">
    <property type="entry name" value="GPR_dom"/>
</dbReference>
<dbReference type="NCBIfam" id="NF001221">
    <property type="entry name" value="PRK00197.1"/>
    <property type="match status" value="1"/>
</dbReference>
<dbReference type="NCBIfam" id="TIGR00407">
    <property type="entry name" value="proA"/>
    <property type="match status" value="1"/>
</dbReference>
<dbReference type="PANTHER" id="PTHR11063:SF8">
    <property type="entry name" value="DELTA-1-PYRROLINE-5-CARBOXYLATE SYNTHASE"/>
    <property type="match status" value="1"/>
</dbReference>
<dbReference type="PANTHER" id="PTHR11063">
    <property type="entry name" value="GLUTAMATE SEMIALDEHYDE DEHYDROGENASE"/>
    <property type="match status" value="1"/>
</dbReference>
<dbReference type="Pfam" id="PF00171">
    <property type="entry name" value="Aldedh"/>
    <property type="match status" value="2"/>
</dbReference>
<dbReference type="PIRSF" id="PIRSF000151">
    <property type="entry name" value="GPR"/>
    <property type="match status" value="1"/>
</dbReference>
<dbReference type="SUPFAM" id="SSF53720">
    <property type="entry name" value="ALDH-like"/>
    <property type="match status" value="1"/>
</dbReference>
<dbReference type="PROSITE" id="PS01223">
    <property type="entry name" value="PROA"/>
    <property type="match status" value="1"/>
</dbReference>
<reference key="1">
    <citation type="journal article" date="2002" name="Genome Res.">
        <title>A complete sequence of the T. tengcongensis genome.</title>
        <authorList>
            <person name="Bao Q."/>
            <person name="Tian Y."/>
            <person name="Li W."/>
            <person name="Xu Z."/>
            <person name="Xuan Z."/>
            <person name="Hu S."/>
            <person name="Dong W."/>
            <person name="Yang J."/>
            <person name="Chen Y."/>
            <person name="Xue Y."/>
            <person name="Xu Y."/>
            <person name="Lai X."/>
            <person name="Huang L."/>
            <person name="Dong X."/>
            <person name="Ma Y."/>
            <person name="Ling L."/>
            <person name="Tan H."/>
            <person name="Chen R."/>
            <person name="Wang J."/>
            <person name="Yu J."/>
            <person name="Yang H."/>
        </authorList>
    </citation>
    <scope>NUCLEOTIDE SEQUENCE [LARGE SCALE GENOMIC DNA]</scope>
    <source>
        <strain>DSM 15242 / JCM 11007 / NBRC 100824 / MB4</strain>
    </source>
</reference>
<sequence length="414" mass="45248">MEVEVKAKKAKEASRKMAVLDTETKNRALINMAEALLENADKILKANEKDVLEAERRNLKASLVDRLKLDEKRIKAMAEGLKEVASLKDPVGDIEEMWIRPNGLQIGKMRVPIGVIGMIYESRPNVTADAAGLCLKAGNAVILRGGSDAINSNIAIASILAEAAYKSGIPEGAIQLIENTDREEVNRMMKLNGLIDLIIPRGGTSLIKNVIENSTVPVIETGVGNCHIFVDESANFEMAKDIIVNAKVQRPGVCNAVETVLVHKGIAERFLPVMVKELSSHGVEIRGCELTKRICPDVKEATEEDWATEYLDLILAVKVVENIDEALEHISKYSTGHSESIVTENYTNAMRFLKSVDSAAVYVNASTRFTDGGEFGFGAEIGISTQKMHARGPMGLKELTTYKYVILGSGQIRK</sequence>
<gene>
    <name evidence="1" type="primary">proA</name>
    <name type="ordered locus">TTE1278</name>
</gene>
<protein>
    <recommendedName>
        <fullName evidence="1">Gamma-glutamyl phosphate reductase</fullName>
        <shortName evidence="1">GPR</shortName>
        <ecNumber evidence="1">1.2.1.41</ecNumber>
    </recommendedName>
    <alternativeName>
        <fullName evidence="1">Glutamate-5-semialdehyde dehydrogenase</fullName>
    </alternativeName>
    <alternativeName>
        <fullName evidence="1">Glutamyl-gamma-semialdehyde dehydrogenase</fullName>
        <shortName evidence="1">GSA dehydrogenase</shortName>
    </alternativeName>
</protein>
<accession>Q8RAE5</accession>